<name>RL20_STRP4</name>
<sequence length="119" mass="13693">MARVKGGVVSRKRRKRILKLAKGYYGAKHILFRTAKEQVMNSYYYAYRDRRQKKRDFRKLWITRINAAARMNGLSYSQLMHGLKLAEIEVNRKMLADLAVNDAVAFTALADAAKAKLGK</sequence>
<gene>
    <name evidence="1" type="primary">rplT</name>
    <name type="ordered locus">SPG_0885</name>
</gene>
<accession>B5E480</accession>
<organism>
    <name type="scientific">Streptococcus pneumoniae serotype 19F (strain G54)</name>
    <dbReference type="NCBI Taxonomy" id="512566"/>
    <lineage>
        <taxon>Bacteria</taxon>
        <taxon>Bacillati</taxon>
        <taxon>Bacillota</taxon>
        <taxon>Bacilli</taxon>
        <taxon>Lactobacillales</taxon>
        <taxon>Streptococcaceae</taxon>
        <taxon>Streptococcus</taxon>
    </lineage>
</organism>
<reference key="1">
    <citation type="journal article" date="2001" name="Microb. Drug Resist.">
        <title>Annotated draft genomic sequence from a Streptococcus pneumoniae type 19F clinical isolate.</title>
        <authorList>
            <person name="Dopazo J."/>
            <person name="Mendoza A."/>
            <person name="Herrero J."/>
            <person name="Caldara F."/>
            <person name="Humbert Y."/>
            <person name="Friedli L."/>
            <person name="Guerrier M."/>
            <person name="Grand-Schenk E."/>
            <person name="Gandin C."/>
            <person name="de Francesco M."/>
            <person name="Polissi A."/>
            <person name="Buell G."/>
            <person name="Feger G."/>
            <person name="Garcia E."/>
            <person name="Peitsch M."/>
            <person name="Garcia-Bustos J.F."/>
        </authorList>
    </citation>
    <scope>NUCLEOTIDE SEQUENCE [LARGE SCALE GENOMIC DNA]</scope>
    <source>
        <strain>G54</strain>
    </source>
</reference>
<reference key="2">
    <citation type="submission" date="2008-03" db="EMBL/GenBank/DDBJ databases">
        <title>Pneumococcal beta glucoside metabolism investigated by whole genome comparison.</title>
        <authorList>
            <person name="Mulas L."/>
            <person name="Trappetti C."/>
            <person name="Hakenbeck R."/>
            <person name="Iannelli F."/>
            <person name="Pozzi G."/>
            <person name="Davidsen T.M."/>
            <person name="Tettelin H."/>
            <person name="Oggioni M."/>
        </authorList>
    </citation>
    <scope>NUCLEOTIDE SEQUENCE [LARGE SCALE GENOMIC DNA]</scope>
    <source>
        <strain>G54</strain>
    </source>
</reference>
<proteinExistence type="inferred from homology"/>
<protein>
    <recommendedName>
        <fullName evidence="1">Large ribosomal subunit protein bL20</fullName>
    </recommendedName>
    <alternativeName>
        <fullName evidence="2">50S ribosomal protein L20</fullName>
    </alternativeName>
</protein>
<evidence type="ECO:0000255" key="1">
    <source>
        <dbReference type="HAMAP-Rule" id="MF_00382"/>
    </source>
</evidence>
<evidence type="ECO:0000305" key="2"/>
<feature type="chain" id="PRO_1000122378" description="Large ribosomal subunit protein bL20">
    <location>
        <begin position="1"/>
        <end position="119"/>
    </location>
</feature>
<dbReference type="EMBL" id="CP001015">
    <property type="protein sequence ID" value="ACF56360.1"/>
    <property type="molecule type" value="Genomic_DNA"/>
</dbReference>
<dbReference type="SMR" id="B5E480"/>
<dbReference type="KEGG" id="spx:SPG_0885"/>
<dbReference type="HOGENOM" id="CLU_123265_0_1_9"/>
<dbReference type="GO" id="GO:1990904">
    <property type="term" value="C:ribonucleoprotein complex"/>
    <property type="evidence" value="ECO:0007669"/>
    <property type="project" value="UniProtKB-KW"/>
</dbReference>
<dbReference type="GO" id="GO:0005840">
    <property type="term" value="C:ribosome"/>
    <property type="evidence" value="ECO:0007669"/>
    <property type="project" value="UniProtKB-KW"/>
</dbReference>
<dbReference type="GO" id="GO:0019843">
    <property type="term" value="F:rRNA binding"/>
    <property type="evidence" value="ECO:0007669"/>
    <property type="project" value="UniProtKB-UniRule"/>
</dbReference>
<dbReference type="GO" id="GO:0003735">
    <property type="term" value="F:structural constituent of ribosome"/>
    <property type="evidence" value="ECO:0007669"/>
    <property type="project" value="InterPro"/>
</dbReference>
<dbReference type="GO" id="GO:0000027">
    <property type="term" value="P:ribosomal large subunit assembly"/>
    <property type="evidence" value="ECO:0007669"/>
    <property type="project" value="UniProtKB-UniRule"/>
</dbReference>
<dbReference type="GO" id="GO:0006412">
    <property type="term" value="P:translation"/>
    <property type="evidence" value="ECO:0007669"/>
    <property type="project" value="InterPro"/>
</dbReference>
<dbReference type="CDD" id="cd07026">
    <property type="entry name" value="Ribosomal_L20"/>
    <property type="match status" value="1"/>
</dbReference>
<dbReference type="FunFam" id="1.10.1900.20:FF:000001">
    <property type="entry name" value="50S ribosomal protein L20"/>
    <property type="match status" value="1"/>
</dbReference>
<dbReference type="Gene3D" id="6.10.160.10">
    <property type="match status" value="1"/>
</dbReference>
<dbReference type="Gene3D" id="1.10.1900.20">
    <property type="entry name" value="Ribosomal protein L20"/>
    <property type="match status" value="1"/>
</dbReference>
<dbReference type="HAMAP" id="MF_00382">
    <property type="entry name" value="Ribosomal_bL20"/>
    <property type="match status" value="1"/>
</dbReference>
<dbReference type="InterPro" id="IPR005813">
    <property type="entry name" value="Ribosomal_bL20"/>
</dbReference>
<dbReference type="InterPro" id="IPR049946">
    <property type="entry name" value="RIBOSOMAL_L20_CS"/>
</dbReference>
<dbReference type="InterPro" id="IPR035566">
    <property type="entry name" value="Ribosomal_protein_bL20_C"/>
</dbReference>
<dbReference type="NCBIfam" id="TIGR01032">
    <property type="entry name" value="rplT_bact"/>
    <property type="match status" value="1"/>
</dbReference>
<dbReference type="PANTHER" id="PTHR10986">
    <property type="entry name" value="39S RIBOSOMAL PROTEIN L20"/>
    <property type="match status" value="1"/>
</dbReference>
<dbReference type="Pfam" id="PF00453">
    <property type="entry name" value="Ribosomal_L20"/>
    <property type="match status" value="1"/>
</dbReference>
<dbReference type="PRINTS" id="PR00062">
    <property type="entry name" value="RIBOSOMALL20"/>
</dbReference>
<dbReference type="SUPFAM" id="SSF74731">
    <property type="entry name" value="Ribosomal protein L20"/>
    <property type="match status" value="1"/>
</dbReference>
<dbReference type="PROSITE" id="PS00937">
    <property type="entry name" value="RIBOSOMAL_L20"/>
    <property type="match status" value="1"/>
</dbReference>
<keyword id="KW-0687">Ribonucleoprotein</keyword>
<keyword id="KW-0689">Ribosomal protein</keyword>
<keyword id="KW-0694">RNA-binding</keyword>
<keyword id="KW-0699">rRNA-binding</keyword>
<comment type="function">
    <text evidence="1">Binds directly to 23S ribosomal RNA and is necessary for the in vitro assembly process of the 50S ribosomal subunit. It is not involved in the protein synthesizing functions of that subunit.</text>
</comment>
<comment type="similarity">
    <text evidence="1">Belongs to the bacterial ribosomal protein bL20 family.</text>
</comment>